<dbReference type="EMBL" id="AJ251866">
    <property type="protein sequence ID" value="CAB63801.1"/>
    <property type="molecule type" value="mRNA"/>
</dbReference>
<dbReference type="EMBL" id="AC012563">
    <property type="protein sequence ID" value="AAG51992.1"/>
    <property type="molecule type" value="Genomic_DNA"/>
</dbReference>
<dbReference type="EMBL" id="CP002684">
    <property type="protein sequence ID" value="AEE34730.1"/>
    <property type="molecule type" value="Genomic_DNA"/>
</dbReference>
<dbReference type="EMBL" id="AY094396">
    <property type="protein sequence ID" value="AAM19775.1"/>
    <property type="molecule type" value="mRNA"/>
</dbReference>
<dbReference type="PIR" id="F96702">
    <property type="entry name" value="F96702"/>
</dbReference>
<dbReference type="RefSeq" id="NP_176964.1">
    <property type="nucleotide sequence ID" value="NM_105467.4"/>
</dbReference>
<dbReference type="SMR" id="Q9S7U5"/>
<dbReference type="BioGRID" id="28346">
    <property type="interactions" value="3"/>
</dbReference>
<dbReference type="FunCoup" id="Q9S7U5">
    <property type="interactions" value="48"/>
</dbReference>
<dbReference type="STRING" id="3702.Q9S7U5"/>
<dbReference type="PaxDb" id="3702-AT1G67970.1"/>
<dbReference type="ProteomicsDB" id="230152"/>
<dbReference type="EnsemblPlants" id="AT1G67970.1">
    <property type="protein sequence ID" value="AT1G67970.1"/>
    <property type="gene ID" value="AT1G67970"/>
</dbReference>
<dbReference type="GeneID" id="843125"/>
<dbReference type="Gramene" id="AT1G67970.1">
    <property type="protein sequence ID" value="AT1G67970.1"/>
    <property type="gene ID" value="AT1G67970"/>
</dbReference>
<dbReference type="KEGG" id="ath:AT1G67970"/>
<dbReference type="Araport" id="AT1G67970"/>
<dbReference type="TAIR" id="AT1G67970">
    <property type="gene designation" value="HSFA8"/>
</dbReference>
<dbReference type="eggNOG" id="KOG0627">
    <property type="taxonomic scope" value="Eukaryota"/>
</dbReference>
<dbReference type="HOGENOM" id="CLU_030308_1_2_1"/>
<dbReference type="InParanoid" id="Q9S7U5"/>
<dbReference type="OMA" id="TDCWEFA"/>
<dbReference type="OrthoDB" id="60033at2759"/>
<dbReference type="PhylomeDB" id="Q9S7U5"/>
<dbReference type="PRO" id="PR:Q9S7U5"/>
<dbReference type="Proteomes" id="UP000006548">
    <property type="component" value="Chromosome 1"/>
</dbReference>
<dbReference type="ExpressionAtlas" id="Q9S7U5">
    <property type="expression patterns" value="baseline and differential"/>
</dbReference>
<dbReference type="GO" id="GO:0005737">
    <property type="term" value="C:cytoplasm"/>
    <property type="evidence" value="ECO:0007669"/>
    <property type="project" value="UniProtKB-SubCell"/>
</dbReference>
<dbReference type="GO" id="GO:0005634">
    <property type="term" value="C:nucleus"/>
    <property type="evidence" value="ECO:0007669"/>
    <property type="project" value="UniProtKB-SubCell"/>
</dbReference>
<dbReference type="GO" id="GO:0003700">
    <property type="term" value="F:DNA-binding transcription factor activity"/>
    <property type="evidence" value="ECO:0000250"/>
    <property type="project" value="TAIR"/>
</dbReference>
<dbReference type="GO" id="GO:0000976">
    <property type="term" value="F:transcription cis-regulatory region binding"/>
    <property type="evidence" value="ECO:0000353"/>
    <property type="project" value="TAIR"/>
</dbReference>
<dbReference type="FunFam" id="1.10.10.10:FF:000037">
    <property type="entry name" value="Heat stress transcription factor B-4"/>
    <property type="match status" value="1"/>
</dbReference>
<dbReference type="Gene3D" id="1.10.10.10">
    <property type="entry name" value="Winged helix-like DNA-binding domain superfamily/Winged helix DNA-binding domain"/>
    <property type="match status" value="1"/>
</dbReference>
<dbReference type="InterPro" id="IPR000232">
    <property type="entry name" value="HSF_DNA-bd"/>
</dbReference>
<dbReference type="InterPro" id="IPR036388">
    <property type="entry name" value="WH-like_DNA-bd_sf"/>
</dbReference>
<dbReference type="InterPro" id="IPR036390">
    <property type="entry name" value="WH_DNA-bd_sf"/>
</dbReference>
<dbReference type="PANTHER" id="PTHR10015">
    <property type="entry name" value="HEAT SHOCK TRANSCRIPTION FACTOR"/>
    <property type="match status" value="1"/>
</dbReference>
<dbReference type="PANTHER" id="PTHR10015:SF325">
    <property type="entry name" value="HEAT STRESS TRANSCRIPTION FACTOR A-8"/>
    <property type="match status" value="1"/>
</dbReference>
<dbReference type="Pfam" id="PF00447">
    <property type="entry name" value="HSF_DNA-bind"/>
    <property type="match status" value="1"/>
</dbReference>
<dbReference type="PRINTS" id="PR00056">
    <property type="entry name" value="HSFDOMAIN"/>
</dbReference>
<dbReference type="SMART" id="SM00415">
    <property type="entry name" value="HSF"/>
    <property type="match status" value="1"/>
</dbReference>
<dbReference type="SUPFAM" id="SSF46785">
    <property type="entry name" value="Winged helix' DNA-binding domain"/>
    <property type="match status" value="1"/>
</dbReference>
<dbReference type="PROSITE" id="PS00434">
    <property type="entry name" value="HSF_DOMAIN"/>
    <property type="match status" value="1"/>
</dbReference>
<comment type="function">
    <text>Transcriptional activator that specifically binds DNA sequence 5'-AGAAnnTTCT-3' known as heat shock promoter elements (HSE).</text>
</comment>
<comment type="subunit">
    <text evidence="1">Homotrimer.</text>
</comment>
<comment type="subcellular location">
    <subcellularLocation>
        <location evidence="4">Cytoplasm</location>
    </subcellularLocation>
    <subcellularLocation>
        <location evidence="4">Nucleus</location>
    </subcellularLocation>
</comment>
<comment type="domain">
    <text evidence="3">The hydrophobic-rich region (HR-A/B) corresponds to the oligomerization domain. AHA motifs are transcriptional activator elements.</text>
</comment>
<comment type="PTM">
    <text evidence="1">Exhibits temperature-dependent phosphorylation.</text>
</comment>
<comment type="similarity">
    <text evidence="4">Belongs to the HSF family. Class A subfamily.</text>
</comment>
<proteinExistence type="evidence at transcript level"/>
<name>HSFA8_ARATH</name>
<evidence type="ECO:0000250" key="1"/>
<evidence type="ECO:0000255" key="2"/>
<evidence type="ECO:0000269" key="3">
    <source>
    </source>
</evidence>
<evidence type="ECO:0000305" key="4"/>
<gene>
    <name type="primary">HSFA8</name>
    <name type="synonym">HSF03</name>
    <name type="synonym">HSF5</name>
    <name type="ordered locus">At1g67970</name>
    <name type="ORF">T23K23.18</name>
</gene>
<protein>
    <recommendedName>
        <fullName>Heat stress transcription factor A-8</fullName>
        <shortName>AtHsfA8</shortName>
    </recommendedName>
    <alternativeName>
        <fullName>AtHsf-03</fullName>
    </alternativeName>
    <alternativeName>
        <fullName>Heat shock factor protein 5</fullName>
        <shortName>HSF 5</shortName>
    </alternativeName>
    <alternativeName>
        <fullName>Heat shock transcription factor 5</fullName>
        <shortName>HSTF 5</shortName>
    </alternativeName>
</protein>
<reference key="1">
    <citation type="book" date="1999" name="Plant responses to environmental stress">
        <title>De-repression of heat shock protein synthesis in transgenic plants.</title>
        <editorList>
            <person name="Smallwood M.F."/>
            <person name="Calvert C.M."/>
            <person name="Bowles D.J."/>
        </editorList>
        <authorList>
            <person name="Schoeffl F."/>
            <person name="Praendl R."/>
        </authorList>
    </citation>
    <scope>NUCLEOTIDE SEQUENCE [MRNA]</scope>
    <source>
        <strain>cv. Columbia</strain>
        <tissue>Green siliques</tissue>
    </source>
</reference>
<reference key="2">
    <citation type="journal article" date="2000" name="Nature">
        <title>Sequence and analysis of chromosome 1 of the plant Arabidopsis thaliana.</title>
        <authorList>
            <person name="Theologis A."/>
            <person name="Ecker J.R."/>
            <person name="Palm C.J."/>
            <person name="Federspiel N.A."/>
            <person name="Kaul S."/>
            <person name="White O."/>
            <person name="Alonso J."/>
            <person name="Altafi H."/>
            <person name="Araujo R."/>
            <person name="Bowman C.L."/>
            <person name="Brooks S.Y."/>
            <person name="Buehler E."/>
            <person name="Chan A."/>
            <person name="Chao Q."/>
            <person name="Chen H."/>
            <person name="Cheuk R.F."/>
            <person name="Chin C.W."/>
            <person name="Chung M.K."/>
            <person name="Conn L."/>
            <person name="Conway A.B."/>
            <person name="Conway A.R."/>
            <person name="Creasy T.H."/>
            <person name="Dewar K."/>
            <person name="Dunn P."/>
            <person name="Etgu P."/>
            <person name="Feldblyum T.V."/>
            <person name="Feng J.-D."/>
            <person name="Fong B."/>
            <person name="Fujii C.Y."/>
            <person name="Gill J.E."/>
            <person name="Goldsmith A.D."/>
            <person name="Haas B."/>
            <person name="Hansen N.F."/>
            <person name="Hughes B."/>
            <person name="Huizar L."/>
            <person name="Hunter J.L."/>
            <person name="Jenkins J."/>
            <person name="Johnson-Hopson C."/>
            <person name="Khan S."/>
            <person name="Khaykin E."/>
            <person name="Kim C.J."/>
            <person name="Koo H.L."/>
            <person name="Kremenetskaia I."/>
            <person name="Kurtz D.B."/>
            <person name="Kwan A."/>
            <person name="Lam B."/>
            <person name="Langin-Hooper S."/>
            <person name="Lee A."/>
            <person name="Lee J.M."/>
            <person name="Lenz C.A."/>
            <person name="Li J.H."/>
            <person name="Li Y.-P."/>
            <person name="Lin X."/>
            <person name="Liu S.X."/>
            <person name="Liu Z.A."/>
            <person name="Luros J.S."/>
            <person name="Maiti R."/>
            <person name="Marziali A."/>
            <person name="Militscher J."/>
            <person name="Miranda M."/>
            <person name="Nguyen M."/>
            <person name="Nierman W.C."/>
            <person name="Osborne B.I."/>
            <person name="Pai G."/>
            <person name="Peterson J."/>
            <person name="Pham P.K."/>
            <person name="Rizzo M."/>
            <person name="Rooney T."/>
            <person name="Rowley D."/>
            <person name="Sakano H."/>
            <person name="Salzberg S.L."/>
            <person name="Schwartz J.R."/>
            <person name="Shinn P."/>
            <person name="Southwick A.M."/>
            <person name="Sun H."/>
            <person name="Tallon L.J."/>
            <person name="Tambunga G."/>
            <person name="Toriumi M.J."/>
            <person name="Town C.D."/>
            <person name="Utterback T."/>
            <person name="Van Aken S."/>
            <person name="Vaysberg M."/>
            <person name="Vysotskaia V.S."/>
            <person name="Walker M."/>
            <person name="Wu D."/>
            <person name="Yu G."/>
            <person name="Fraser C.M."/>
            <person name="Venter J.C."/>
            <person name="Davis R.W."/>
        </authorList>
    </citation>
    <scope>NUCLEOTIDE SEQUENCE [LARGE SCALE GENOMIC DNA]</scope>
    <source>
        <strain>cv. Columbia</strain>
    </source>
</reference>
<reference key="3">
    <citation type="journal article" date="2017" name="Plant J.">
        <title>Araport11: a complete reannotation of the Arabidopsis thaliana reference genome.</title>
        <authorList>
            <person name="Cheng C.Y."/>
            <person name="Krishnakumar V."/>
            <person name="Chan A.P."/>
            <person name="Thibaud-Nissen F."/>
            <person name="Schobel S."/>
            <person name="Town C.D."/>
        </authorList>
    </citation>
    <scope>GENOME REANNOTATION</scope>
    <source>
        <strain>cv. Columbia</strain>
    </source>
</reference>
<reference key="4">
    <citation type="journal article" date="2003" name="Science">
        <title>Empirical analysis of transcriptional activity in the Arabidopsis genome.</title>
        <authorList>
            <person name="Yamada K."/>
            <person name="Lim J."/>
            <person name="Dale J.M."/>
            <person name="Chen H."/>
            <person name="Shinn P."/>
            <person name="Palm C.J."/>
            <person name="Southwick A.M."/>
            <person name="Wu H.C."/>
            <person name="Kim C.J."/>
            <person name="Nguyen M."/>
            <person name="Pham P.K."/>
            <person name="Cheuk R.F."/>
            <person name="Karlin-Newmann G."/>
            <person name="Liu S.X."/>
            <person name="Lam B."/>
            <person name="Sakano H."/>
            <person name="Wu T."/>
            <person name="Yu G."/>
            <person name="Miranda M."/>
            <person name="Quach H.L."/>
            <person name="Tripp M."/>
            <person name="Chang C.H."/>
            <person name="Lee J.M."/>
            <person name="Toriumi M.J."/>
            <person name="Chan M.M."/>
            <person name="Tang C.C."/>
            <person name="Onodera C.S."/>
            <person name="Deng J.M."/>
            <person name="Akiyama K."/>
            <person name="Ansari Y."/>
            <person name="Arakawa T."/>
            <person name="Banh J."/>
            <person name="Banno F."/>
            <person name="Bowser L."/>
            <person name="Brooks S.Y."/>
            <person name="Carninci P."/>
            <person name="Chao Q."/>
            <person name="Choy N."/>
            <person name="Enju A."/>
            <person name="Goldsmith A.D."/>
            <person name="Gurjal M."/>
            <person name="Hansen N.F."/>
            <person name="Hayashizaki Y."/>
            <person name="Johnson-Hopson C."/>
            <person name="Hsuan V.W."/>
            <person name="Iida K."/>
            <person name="Karnes M."/>
            <person name="Khan S."/>
            <person name="Koesema E."/>
            <person name="Ishida J."/>
            <person name="Jiang P.X."/>
            <person name="Jones T."/>
            <person name="Kawai J."/>
            <person name="Kamiya A."/>
            <person name="Meyers C."/>
            <person name="Nakajima M."/>
            <person name="Narusaka M."/>
            <person name="Seki M."/>
            <person name="Sakurai T."/>
            <person name="Satou M."/>
            <person name="Tamse R."/>
            <person name="Vaysberg M."/>
            <person name="Wallender E.K."/>
            <person name="Wong C."/>
            <person name="Yamamura Y."/>
            <person name="Yuan S."/>
            <person name="Shinozaki K."/>
            <person name="Davis R.W."/>
            <person name="Theologis A."/>
            <person name="Ecker J.R."/>
        </authorList>
    </citation>
    <scope>NUCLEOTIDE SEQUENCE [LARGE SCALE MRNA]</scope>
    <source>
        <strain>cv. Columbia</strain>
    </source>
</reference>
<reference key="5">
    <citation type="journal article" date="2001" name="Cell Stress Chaperones">
        <title>Arabidopsis and the heat stress transcription factor world: how many heat stress transcription factors do we need?</title>
        <authorList>
            <person name="Nover L."/>
            <person name="Bharti K."/>
            <person name="Doering P."/>
            <person name="Mishra S.K."/>
            <person name="Ganguli A."/>
            <person name="Scharf K.-D."/>
        </authorList>
    </citation>
    <scope>GENE FAMILY</scope>
    <scope>NOMENCLATURE</scope>
    <scope>DOMAIN AHA</scope>
</reference>
<reference key="6">
    <citation type="journal article" date="2008" name="J. Genet. Genomics">
        <title>Genome-wide analysis of heat shock transcription factor families in rice and Arabidopsis.</title>
        <authorList>
            <person name="Guo J."/>
            <person name="Wu J."/>
            <person name="Ji Q."/>
            <person name="Wang C."/>
            <person name="Luo L."/>
            <person name="Yuan Y."/>
            <person name="Wang Y."/>
            <person name="Wang J."/>
        </authorList>
    </citation>
    <scope>GENE FAMILY</scope>
    <scope>NOMENCLATURE</scope>
</reference>
<organism>
    <name type="scientific">Arabidopsis thaliana</name>
    <name type="common">Mouse-ear cress</name>
    <dbReference type="NCBI Taxonomy" id="3702"/>
    <lineage>
        <taxon>Eukaryota</taxon>
        <taxon>Viridiplantae</taxon>
        <taxon>Streptophyta</taxon>
        <taxon>Embryophyta</taxon>
        <taxon>Tracheophyta</taxon>
        <taxon>Spermatophyta</taxon>
        <taxon>Magnoliopsida</taxon>
        <taxon>eudicotyledons</taxon>
        <taxon>Gunneridae</taxon>
        <taxon>Pentapetalae</taxon>
        <taxon>rosids</taxon>
        <taxon>malvids</taxon>
        <taxon>Brassicales</taxon>
        <taxon>Brassicaceae</taxon>
        <taxon>Camelineae</taxon>
        <taxon>Arabidopsis</taxon>
    </lineage>
</organism>
<accession>Q9S7U5</accession>
<keyword id="KW-0010">Activator</keyword>
<keyword id="KW-0963">Cytoplasm</keyword>
<keyword id="KW-0238">DNA-binding</keyword>
<keyword id="KW-0539">Nucleus</keyword>
<keyword id="KW-0597">Phosphoprotein</keyword>
<keyword id="KW-1185">Reference proteome</keyword>
<keyword id="KW-0677">Repeat</keyword>
<keyword id="KW-0346">Stress response</keyword>
<keyword id="KW-0804">Transcription</keyword>
<keyword id="KW-0805">Transcription regulation</keyword>
<sequence>MVKSTDGGGGSSSSSSVAPFLRKCYDMVDDSTTDSIISWSPSADNSFVILDTTVFSVQLLPKYFKHSNFSSFIRQLNIYGFRKVDADRWEFANDGFVRGQKDLLKNVIRRKNVQSSEQSKHESTSTTYAQEKSGLWKEVDILKGDKQVLAQELIKVRQYQEVTDTKMLHLEDRVQGMEESQQEMLSFLVMVMKNPSLLVQLLQPKEKNTWRKAGEGAKIVEEVTDEGESNSYGLPLVTYQPPSDNNGTAKSNSNDVNDFLRNADMLKFCLDENHVPLIIPDLYDDGAWEKLLLLSPSRKKTKKQENIVKKGKDDLTLEEEEEDGTMELDKSYMLKLISEEMEKPDDFEFGQLTPERSRNLEILTEQMELLASNE</sequence>
<feature type="chain" id="PRO_0000124586" description="Heat stress transcription factor A-8">
    <location>
        <begin position="1"/>
        <end position="374"/>
    </location>
</feature>
<feature type="DNA-binding region" evidence="1">
    <location>
        <begin position="17"/>
        <end position="112"/>
    </location>
</feature>
<feature type="region of interest" description="Hydrophobic repeat HR-A/B">
    <location>
        <begin position="126"/>
        <end position="192"/>
    </location>
</feature>
<feature type="short sequence motif" description="AHA1">
    <location>
        <begin position="285"/>
        <end position="294"/>
    </location>
</feature>
<feature type="short sequence motif" description="Nuclear localization signal" evidence="2">
    <location>
        <begin position="298"/>
        <end position="303"/>
    </location>
</feature>
<feature type="short sequence motif" description="AHA2">
    <location>
        <begin position="330"/>
        <end position="339"/>
    </location>
</feature>
<feature type="short sequence motif" description="Nuclear export signal" evidence="2">
    <location>
        <begin position="363"/>
        <end position="370"/>
    </location>
</feature>